<proteinExistence type="inferred from homology"/>
<protein>
    <recommendedName>
        <fullName evidence="1">UPF0253 protein YaeP</fullName>
    </recommendedName>
</protein>
<evidence type="ECO:0000255" key="1">
    <source>
        <dbReference type="HAMAP-Rule" id="MF_01064"/>
    </source>
</evidence>
<evidence type="ECO:0000305" key="2"/>
<feature type="chain" id="PRO_0000277519" description="UPF0253 protein YaeP">
    <location>
        <begin position="1"/>
        <end position="66"/>
    </location>
</feature>
<reference key="1">
    <citation type="journal article" date="2006" name="Proc. Natl. Acad. Sci. U.S.A.">
        <title>Identification of genes subject to positive selection in uropathogenic strains of Escherichia coli: a comparative genomics approach.</title>
        <authorList>
            <person name="Chen S.L."/>
            <person name="Hung C.-S."/>
            <person name="Xu J."/>
            <person name="Reigstad C.S."/>
            <person name="Magrini V."/>
            <person name="Sabo A."/>
            <person name="Blasiar D."/>
            <person name="Bieri T."/>
            <person name="Meyer R.R."/>
            <person name="Ozersky P."/>
            <person name="Armstrong J.R."/>
            <person name="Fulton R.S."/>
            <person name="Latreille J.P."/>
            <person name="Spieth J."/>
            <person name="Hooton T.M."/>
            <person name="Mardis E.R."/>
            <person name="Hultgren S.J."/>
            <person name="Gordon J.I."/>
        </authorList>
    </citation>
    <scope>NUCLEOTIDE SEQUENCE [LARGE SCALE GENOMIC DNA]</scope>
    <source>
        <strain>UTI89 / UPEC</strain>
    </source>
</reference>
<accession>Q1RFZ9</accession>
<organism>
    <name type="scientific">Escherichia coli (strain UTI89 / UPEC)</name>
    <dbReference type="NCBI Taxonomy" id="364106"/>
    <lineage>
        <taxon>Bacteria</taxon>
        <taxon>Pseudomonadati</taxon>
        <taxon>Pseudomonadota</taxon>
        <taxon>Gammaproteobacteria</taxon>
        <taxon>Enterobacterales</taxon>
        <taxon>Enterobacteriaceae</taxon>
        <taxon>Escherichia</taxon>
    </lineage>
</organism>
<name>YAEP_ECOUT</name>
<dbReference type="EMBL" id="CP000243">
    <property type="protein sequence ID" value="ABE05715.1"/>
    <property type="status" value="ALT_INIT"/>
    <property type="molecule type" value="Genomic_DNA"/>
</dbReference>
<dbReference type="RefSeq" id="WP_000417059.1">
    <property type="nucleotide sequence ID" value="NZ_CP064825.1"/>
</dbReference>
<dbReference type="SMR" id="Q1RFZ9"/>
<dbReference type="KEGG" id="eci:UTI89_C0205"/>
<dbReference type="HOGENOM" id="CLU_190008_0_0_6"/>
<dbReference type="Proteomes" id="UP000001952">
    <property type="component" value="Chromosome"/>
</dbReference>
<dbReference type="HAMAP" id="MF_01064">
    <property type="entry name" value="UPF0253"/>
    <property type="match status" value="1"/>
</dbReference>
<dbReference type="InterPro" id="IPR009624">
    <property type="entry name" value="UPF0253"/>
</dbReference>
<dbReference type="NCBIfam" id="NF003436">
    <property type="entry name" value="PRK04964.1"/>
    <property type="match status" value="1"/>
</dbReference>
<dbReference type="Pfam" id="PF06786">
    <property type="entry name" value="UPF0253"/>
    <property type="match status" value="1"/>
</dbReference>
<sequence>MEKYCELIRKRYAEIASGDLGYVPDALGCVLKVLNEMAADDALSEAVREKAAYAAANLLVSDYVNK</sequence>
<gene>
    <name evidence="1" type="primary">yaeP</name>
    <name type="ordered locus">UTI89_C0205</name>
</gene>
<comment type="similarity">
    <text evidence="1">Belongs to the UPF0253 family.</text>
</comment>
<comment type="sequence caution" evidence="2">
    <conflict type="erroneous initiation">
        <sequence resource="EMBL-CDS" id="ABE05715"/>
    </conflict>
</comment>